<accession>Q8WCJ7</accession>
<protein>
    <recommendedName>
        <fullName>Cytochrome b</fullName>
    </recommendedName>
    <alternativeName>
        <fullName>Complex III subunit 3</fullName>
    </alternativeName>
    <alternativeName>
        <fullName>Complex III subunit III</fullName>
    </alternativeName>
    <alternativeName>
        <fullName>Cytochrome b-c1 complex subunit 3</fullName>
    </alternativeName>
    <alternativeName>
        <fullName>Ubiquinol-cytochrome-c reductase complex cytochrome b subunit</fullName>
    </alternativeName>
</protein>
<feature type="chain" id="PRO_0000060837" description="Cytochrome b">
    <location>
        <begin position="1"/>
        <end position="379"/>
    </location>
</feature>
<feature type="transmembrane region" description="Helical" evidence="2">
    <location>
        <begin position="33"/>
        <end position="53"/>
    </location>
</feature>
<feature type="transmembrane region" description="Helical" evidence="2">
    <location>
        <begin position="77"/>
        <end position="98"/>
    </location>
</feature>
<feature type="transmembrane region" description="Helical" evidence="2">
    <location>
        <begin position="113"/>
        <end position="133"/>
    </location>
</feature>
<feature type="transmembrane region" description="Helical" evidence="2">
    <location>
        <begin position="178"/>
        <end position="198"/>
    </location>
</feature>
<feature type="transmembrane region" description="Helical" evidence="2">
    <location>
        <begin position="226"/>
        <end position="246"/>
    </location>
</feature>
<feature type="transmembrane region" description="Helical" evidence="2">
    <location>
        <begin position="288"/>
        <end position="308"/>
    </location>
</feature>
<feature type="transmembrane region" description="Helical" evidence="2">
    <location>
        <begin position="320"/>
        <end position="340"/>
    </location>
</feature>
<feature type="transmembrane region" description="Helical" evidence="2">
    <location>
        <begin position="347"/>
        <end position="367"/>
    </location>
</feature>
<feature type="binding site" description="axial binding residue" evidence="2">
    <location>
        <position position="83"/>
    </location>
    <ligand>
        <name>heme b</name>
        <dbReference type="ChEBI" id="CHEBI:60344"/>
        <label>b562</label>
    </ligand>
    <ligandPart>
        <name>Fe</name>
        <dbReference type="ChEBI" id="CHEBI:18248"/>
    </ligandPart>
</feature>
<feature type="binding site" description="axial binding residue" evidence="2">
    <location>
        <position position="97"/>
    </location>
    <ligand>
        <name>heme b</name>
        <dbReference type="ChEBI" id="CHEBI:60344"/>
        <label>b566</label>
    </ligand>
    <ligandPart>
        <name>Fe</name>
        <dbReference type="ChEBI" id="CHEBI:18248"/>
    </ligandPart>
</feature>
<feature type="binding site" description="axial binding residue" evidence="2">
    <location>
        <position position="182"/>
    </location>
    <ligand>
        <name>heme b</name>
        <dbReference type="ChEBI" id="CHEBI:60344"/>
        <label>b562</label>
    </ligand>
    <ligandPart>
        <name>Fe</name>
        <dbReference type="ChEBI" id="CHEBI:18248"/>
    </ligandPart>
</feature>
<feature type="binding site" description="axial binding residue" evidence="2">
    <location>
        <position position="196"/>
    </location>
    <ligand>
        <name>heme b</name>
        <dbReference type="ChEBI" id="CHEBI:60344"/>
        <label>b566</label>
    </ligand>
    <ligandPart>
        <name>Fe</name>
        <dbReference type="ChEBI" id="CHEBI:18248"/>
    </ligandPart>
</feature>
<feature type="binding site" evidence="2">
    <location>
        <position position="201"/>
    </location>
    <ligand>
        <name>a ubiquinone</name>
        <dbReference type="ChEBI" id="CHEBI:16389"/>
    </ligand>
</feature>
<evidence type="ECO:0000250" key="1"/>
<evidence type="ECO:0000250" key="2">
    <source>
        <dbReference type="UniProtKB" id="P00157"/>
    </source>
</evidence>
<evidence type="ECO:0000255" key="3">
    <source>
        <dbReference type="PROSITE-ProRule" id="PRU00967"/>
    </source>
</evidence>
<evidence type="ECO:0000255" key="4">
    <source>
        <dbReference type="PROSITE-ProRule" id="PRU00968"/>
    </source>
</evidence>
<proteinExistence type="inferred from homology"/>
<reference key="1">
    <citation type="journal article" date="2002" name="Mol. Phylogenet. Evol.">
        <title>Molecular phylogeny of short-tailed shrews, Blarina (Insectivora; Soricidae).</title>
        <authorList>
            <person name="Brant S.V."/>
            <person name="Orti G."/>
        </authorList>
    </citation>
    <scope>NUCLEOTIDE SEQUENCE [GENOMIC DNA]</scope>
    <source>
        <strain>Isolate 1082cr</strain>
    </source>
</reference>
<comment type="function">
    <text evidence="2">Component of the ubiquinol-cytochrome c reductase complex (complex III or cytochrome b-c1 complex) that is part of the mitochondrial respiratory chain. The b-c1 complex mediates electron transfer from ubiquinol to cytochrome c. Contributes to the generation of a proton gradient across the mitochondrial membrane that is then used for ATP synthesis.</text>
</comment>
<comment type="cofactor">
    <cofactor evidence="2">
        <name>heme b</name>
        <dbReference type="ChEBI" id="CHEBI:60344"/>
    </cofactor>
    <text evidence="2">Binds 2 heme b groups non-covalently.</text>
</comment>
<comment type="subunit">
    <text evidence="2">The cytochrome bc1 complex contains 11 subunits: 3 respiratory subunits (MT-CYB, CYC1 and UQCRFS1), 2 core proteins (UQCRC1 and UQCRC2) and 6 low-molecular weight proteins (UQCRH/QCR6, UQCRB/QCR7, UQCRQ/QCR8, UQCR10/QCR9, UQCR11/QCR10 and a cleavage product of UQCRFS1). This cytochrome bc1 complex then forms a dimer.</text>
</comment>
<comment type="subcellular location">
    <subcellularLocation>
        <location evidence="2">Mitochondrion inner membrane</location>
        <topology evidence="2">Multi-pass membrane protein</topology>
    </subcellularLocation>
</comment>
<comment type="miscellaneous">
    <text evidence="1">Heme 1 (or BL or b562) is low-potential and absorbs at about 562 nm, and heme 2 (or BH or b566) is high-potential and absorbs at about 566 nm.</text>
</comment>
<comment type="similarity">
    <text evidence="3 4">Belongs to the cytochrome b family.</text>
</comment>
<comment type="caution">
    <text evidence="2">The full-length protein contains only eight transmembrane helices, not nine as predicted by bioinformatics tools.</text>
</comment>
<gene>
    <name type="primary">MT-CYB</name>
    <name type="synonym">COB</name>
    <name type="synonym">CYTB</name>
    <name type="synonym">MTCYB</name>
</gene>
<keyword id="KW-0249">Electron transport</keyword>
<keyword id="KW-0349">Heme</keyword>
<keyword id="KW-0408">Iron</keyword>
<keyword id="KW-0472">Membrane</keyword>
<keyword id="KW-0479">Metal-binding</keyword>
<keyword id="KW-0496">Mitochondrion</keyword>
<keyword id="KW-0999">Mitochondrion inner membrane</keyword>
<keyword id="KW-0679">Respiratory chain</keyword>
<keyword id="KW-0812">Transmembrane</keyword>
<keyword id="KW-1133">Transmembrane helix</keyword>
<keyword id="KW-0813">Transport</keyword>
<keyword id="KW-0830">Ubiquinone</keyword>
<organism>
    <name type="scientific">Cryptotis parva</name>
    <name type="common">North American least shrew</name>
    <name type="synonym">Sorex parvus</name>
    <dbReference type="NCBI Taxonomy" id="183661"/>
    <lineage>
        <taxon>Eukaryota</taxon>
        <taxon>Metazoa</taxon>
        <taxon>Chordata</taxon>
        <taxon>Craniata</taxon>
        <taxon>Vertebrata</taxon>
        <taxon>Euteleostomi</taxon>
        <taxon>Mammalia</taxon>
        <taxon>Eutheria</taxon>
        <taxon>Laurasiatheria</taxon>
        <taxon>Eulipotyphla</taxon>
        <taxon>Soricidae</taxon>
        <taxon>Soricinae</taxon>
        <taxon>Cryptotis</taxon>
    </lineage>
</organism>
<dbReference type="EMBL" id="AF395483">
    <property type="protein sequence ID" value="AAL65904.1"/>
    <property type="molecule type" value="Genomic_DNA"/>
</dbReference>
<dbReference type="SMR" id="Q8WCJ7"/>
<dbReference type="GO" id="GO:0005743">
    <property type="term" value="C:mitochondrial inner membrane"/>
    <property type="evidence" value="ECO:0007669"/>
    <property type="project" value="UniProtKB-SubCell"/>
</dbReference>
<dbReference type="GO" id="GO:0045275">
    <property type="term" value="C:respiratory chain complex III"/>
    <property type="evidence" value="ECO:0007669"/>
    <property type="project" value="InterPro"/>
</dbReference>
<dbReference type="GO" id="GO:0046872">
    <property type="term" value="F:metal ion binding"/>
    <property type="evidence" value="ECO:0007669"/>
    <property type="project" value="UniProtKB-KW"/>
</dbReference>
<dbReference type="GO" id="GO:0008121">
    <property type="term" value="F:ubiquinol-cytochrome-c reductase activity"/>
    <property type="evidence" value="ECO:0007669"/>
    <property type="project" value="InterPro"/>
</dbReference>
<dbReference type="GO" id="GO:0006122">
    <property type="term" value="P:mitochondrial electron transport, ubiquinol to cytochrome c"/>
    <property type="evidence" value="ECO:0007669"/>
    <property type="project" value="TreeGrafter"/>
</dbReference>
<dbReference type="CDD" id="cd00290">
    <property type="entry name" value="cytochrome_b_C"/>
    <property type="match status" value="1"/>
</dbReference>
<dbReference type="CDD" id="cd00284">
    <property type="entry name" value="Cytochrome_b_N"/>
    <property type="match status" value="1"/>
</dbReference>
<dbReference type="FunFam" id="1.20.810.10:FF:000002">
    <property type="entry name" value="Cytochrome b"/>
    <property type="match status" value="1"/>
</dbReference>
<dbReference type="Gene3D" id="1.20.810.10">
    <property type="entry name" value="Cytochrome Bc1 Complex, Chain C"/>
    <property type="match status" value="1"/>
</dbReference>
<dbReference type="InterPro" id="IPR005798">
    <property type="entry name" value="Cyt_b/b6_C"/>
</dbReference>
<dbReference type="InterPro" id="IPR036150">
    <property type="entry name" value="Cyt_b/b6_C_sf"/>
</dbReference>
<dbReference type="InterPro" id="IPR005797">
    <property type="entry name" value="Cyt_b/b6_N"/>
</dbReference>
<dbReference type="InterPro" id="IPR027387">
    <property type="entry name" value="Cytb/b6-like_sf"/>
</dbReference>
<dbReference type="InterPro" id="IPR030689">
    <property type="entry name" value="Cytochrome_b"/>
</dbReference>
<dbReference type="InterPro" id="IPR048260">
    <property type="entry name" value="Cytochrome_b_C_euk/bac"/>
</dbReference>
<dbReference type="InterPro" id="IPR048259">
    <property type="entry name" value="Cytochrome_b_N_euk/bac"/>
</dbReference>
<dbReference type="InterPro" id="IPR016174">
    <property type="entry name" value="Di-haem_cyt_TM"/>
</dbReference>
<dbReference type="PANTHER" id="PTHR19271">
    <property type="entry name" value="CYTOCHROME B"/>
    <property type="match status" value="1"/>
</dbReference>
<dbReference type="PANTHER" id="PTHR19271:SF16">
    <property type="entry name" value="CYTOCHROME B"/>
    <property type="match status" value="1"/>
</dbReference>
<dbReference type="Pfam" id="PF00032">
    <property type="entry name" value="Cytochrom_B_C"/>
    <property type="match status" value="1"/>
</dbReference>
<dbReference type="Pfam" id="PF00033">
    <property type="entry name" value="Cytochrome_B"/>
    <property type="match status" value="1"/>
</dbReference>
<dbReference type="PIRSF" id="PIRSF038885">
    <property type="entry name" value="COB"/>
    <property type="match status" value="1"/>
</dbReference>
<dbReference type="SUPFAM" id="SSF81648">
    <property type="entry name" value="a domain/subunit of cytochrome bc1 complex (Ubiquinol-cytochrome c reductase)"/>
    <property type="match status" value="1"/>
</dbReference>
<dbReference type="SUPFAM" id="SSF81342">
    <property type="entry name" value="Transmembrane di-heme cytochromes"/>
    <property type="match status" value="1"/>
</dbReference>
<dbReference type="PROSITE" id="PS51003">
    <property type="entry name" value="CYTB_CTER"/>
    <property type="match status" value="1"/>
</dbReference>
<dbReference type="PROSITE" id="PS51002">
    <property type="entry name" value="CYTB_NTER"/>
    <property type="match status" value="1"/>
</dbReference>
<geneLocation type="mitochondrion"/>
<name>CYB_CRYPR</name>
<sequence length="379" mass="42688">MTNIRKTHPLMKIINSSFIDLPTPSNISSWWNFGSLLGICLIIQILTGLFLAMHYTSDTMTAFSSVTHICRDVNYGWLIRYLHANGASMFFICLFLHVGRGLYYGSYMFMETWNIGVLLLFAVMATAFMGYVLPWGQMSFWGATVITNLLSAIPYIGSDLVQWIWGGFSVDKATLTRFFAFHFILPFVIAALAGVHLLFLHETGSNNPSGLPSDADKIPFHPYYTIKDILGILLLILVLTCLVLFSPDLLGDPDNYTPANPLNTPPHIKPEWYFLFAYAILRSIPNKLGGVLALVLSILILAFIPLLHTSKQRSMMFRPLSQCLFWILVADLLTLTWIGGQPVEHPFIIIGQLASILYFMLLLVIMPITSLLENNLLKW</sequence>